<keyword id="KW-0066">ATP synthesis</keyword>
<keyword id="KW-0067">ATP-binding</keyword>
<keyword id="KW-0997">Cell inner membrane</keyword>
<keyword id="KW-1003">Cell membrane</keyword>
<keyword id="KW-0139">CF(1)</keyword>
<keyword id="KW-0375">Hydrogen ion transport</keyword>
<keyword id="KW-0406">Ion transport</keyword>
<keyword id="KW-0472">Membrane</keyword>
<keyword id="KW-0547">Nucleotide-binding</keyword>
<keyword id="KW-1278">Translocase</keyword>
<keyword id="KW-0813">Transport</keyword>
<sequence length="531" mass="56594">MVKAVTSSKETAKVEKKKSAPRSGVKKAVSKSQAGVKDSSSPVHKSSKKAPLAEAAVGVIKQVIGAVVDVQFEGPLPNILNALETDNLGNRLVLEVAQHLGENTVRTIAMDTTDGLVRGQKVFDTGTQISVPVGEATLGRIMNVIGEPVDNVGPIATSKTRSIHQEAPEYVEQSTASEILVTGIKVVDLLAPYSKGGKVGLFGGAGVGKTVLIMELINNIAKAHGGYSVFAGVGERTREGNDLYYEMIESRVNVNPKDNNGSTEGSKCALVYGQMNEPPGARARVALSGLTIAESFRDEGQDVLFFVDNIFRFTQAGAEVSALLGRIPSAVGYQPTLATDMGALQERITSTRTGSITSVQAIYVPADDLTDPAPATSFAHLDATTVLSRSIAEKGIYPAVDPLDSFSRMLDPLIVGEEHYTVACQVQTILQRYRSLQDIIAILGMDELSEDDKLLVGRARKIERFLSQPFHVAEAFTGSPGKLVPLEETIKGFKGLCAGEYDNLPEAAFYMVGSIDEAVEKGKRLIAEVSS</sequence>
<gene>
    <name evidence="1" type="primary">atpD</name>
    <name type="ordered locus">BH15320</name>
</gene>
<reference key="1">
    <citation type="journal article" date="2004" name="Proc. Natl. Acad. Sci. U.S.A.">
        <title>The louse-borne human pathogen Bartonella quintana is a genomic derivative of the zoonotic agent Bartonella henselae.</title>
        <authorList>
            <person name="Alsmark U.C.M."/>
            <person name="Frank A.C."/>
            <person name="Karlberg E.O."/>
            <person name="Legault B.-A."/>
            <person name="Ardell D.H."/>
            <person name="Canbaeck B."/>
            <person name="Eriksson A.-S."/>
            <person name="Naeslund A.K."/>
            <person name="Handley S.A."/>
            <person name="Huvet M."/>
            <person name="La Scola B."/>
            <person name="Holmberg M."/>
            <person name="Andersson S.G.E."/>
        </authorList>
    </citation>
    <scope>NUCLEOTIDE SEQUENCE [LARGE SCALE GENOMIC DNA]</scope>
    <source>
        <strain>ATCC 49882 / DSM 28221 / CCUG 30454 / Houston 1</strain>
    </source>
</reference>
<protein>
    <recommendedName>
        <fullName evidence="1">ATP synthase subunit beta</fullName>
        <ecNumber evidence="1">7.1.2.2</ecNumber>
    </recommendedName>
    <alternativeName>
        <fullName evidence="1">ATP synthase F1 sector subunit beta</fullName>
    </alternativeName>
    <alternativeName>
        <fullName evidence="1">F-ATPase subunit beta</fullName>
    </alternativeName>
</protein>
<comment type="function">
    <text evidence="1">Produces ATP from ADP in the presence of a proton gradient across the membrane. The catalytic sites are hosted primarily by the beta subunits.</text>
</comment>
<comment type="catalytic activity">
    <reaction evidence="1">
        <text>ATP + H2O + 4 H(+)(in) = ADP + phosphate + 5 H(+)(out)</text>
        <dbReference type="Rhea" id="RHEA:57720"/>
        <dbReference type="ChEBI" id="CHEBI:15377"/>
        <dbReference type="ChEBI" id="CHEBI:15378"/>
        <dbReference type="ChEBI" id="CHEBI:30616"/>
        <dbReference type="ChEBI" id="CHEBI:43474"/>
        <dbReference type="ChEBI" id="CHEBI:456216"/>
        <dbReference type="EC" id="7.1.2.2"/>
    </reaction>
</comment>
<comment type="subunit">
    <text evidence="1">F-type ATPases have 2 components, CF(1) - the catalytic core - and CF(0) - the membrane proton channel. CF(1) has five subunits: alpha(3), beta(3), gamma(1), delta(1), epsilon(1). CF(0) has three main subunits: a(1), b(2) and c(9-12). The alpha and beta chains form an alternating ring which encloses part of the gamma chain. CF(1) is attached to CF(0) by a central stalk formed by the gamma and epsilon chains, while a peripheral stalk is formed by the delta and b chains.</text>
</comment>
<comment type="subcellular location">
    <subcellularLocation>
        <location evidence="1">Cell inner membrane</location>
        <topology evidence="1">Peripheral membrane protein</topology>
    </subcellularLocation>
</comment>
<comment type="similarity">
    <text evidence="1">Belongs to the ATPase alpha/beta chains family.</text>
</comment>
<name>ATPB_BARHE</name>
<organism>
    <name type="scientific">Bartonella henselae (strain ATCC 49882 / DSM 28221 / CCUG 30454 / Houston 1)</name>
    <name type="common">Rochalimaea henselae</name>
    <dbReference type="NCBI Taxonomy" id="283166"/>
    <lineage>
        <taxon>Bacteria</taxon>
        <taxon>Pseudomonadati</taxon>
        <taxon>Pseudomonadota</taxon>
        <taxon>Alphaproteobacteria</taxon>
        <taxon>Hyphomicrobiales</taxon>
        <taxon>Bartonellaceae</taxon>
        <taxon>Bartonella</taxon>
    </lineage>
</organism>
<evidence type="ECO:0000255" key="1">
    <source>
        <dbReference type="HAMAP-Rule" id="MF_01347"/>
    </source>
</evidence>
<evidence type="ECO:0000256" key="2">
    <source>
        <dbReference type="SAM" id="MobiDB-lite"/>
    </source>
</evidence>
<feature type="chain" id="PRO_0000254214" description="ATP synthase subunit beta">
    <location>
        <begin position="1"/>
        <end position="531"/>
    </location>
</feature>
<feature type="region of interest" description="Disordered" evidence="2">
    <location>
        <begin position="1"/>
        <end position="48"/>
    </location>
</feature>
<feature type="compositionally biased region" description="Basic residues" evidence="2">
    <location>
        <begin position="19"/>
        <end position="29"/>
    </location>
</feature>
<feature type="compositionally biased region" description="Polar residues" evidence="2">
    <location>
        <begin position="30"/>
        <end position="44"/>
    </location>
</feature>
<feature type="binding site" evidence="1">
    <location>
        <begin position="203"/>
        <end position="210"/>
    </location>
    <ligand>
        <name>ATP</name>
        <dbReference type="ChEBI" id="CHEBI:30616"/>
    </ligand>
</feature>
<dbReference type="EC" id="7.1.2.2" evidence="1"/>
<dbReference type="EMBL" id="BX897699">
    <property type="protein sequence ID" value="CAF28295.1"/>
    <property type="molecule type" value="Genomic_DNA"/>
</dbReference>
<dbReference type="RefSeq" id="WP_011181298.1">
    <property type="nucleotide sequence ID" value="NZ_LRIJ02000001.1"/>
</dbReference>
<dbReference type="SMR" id="Q6G1W9"/>
<dbReference type="PaxDb" id="283166-BH15320"/>
<dbReference type="EnsemblBacteria" id="CAF28295">
    <property type="protein sequence ID" value="CAF28295"/>
    <property type="gene ID" value="BH15320"/>
</dbReference>
<dbReference type="GeneID" id="92986150"/>
<dbReference type="KEGG" id="bhe:BH15320"/>
<dbReference type="eggNOG" id="COG0055">
    <property type="taxonomic scope" value="Bacteria"/>
</dbReference>
<dbReference type="OrthoDB" id="9801639at2"/>
<dbReference type="Proteomes" id="UP000000421">
    <property type="component" value="Chromosome"/>
</dbReference>
<dbReference type="GO" id="GO:0005886">
    <property type="term" value="C:plasma membrane"/>
    <property type="evidence" value="ECO:0007669"/>
    <property type="project" value="UniProtKB-SubCell"/>
</dbReference>
<dbReference type="GO" id="GO:0045259">
    <property type="term" value="C:proton-transporting ATP synthase complex"/>
    <property type="evidence" value="ECO:0007669"/>
    <property type="project" value="UniProtKB-KW"/>
</dbReference>
<dbReference type="GO" id="GO:0005524">
    <property type="term" value="F:ATP binding"/>
    <property type="evidence" value="ECO:0007669"/>
    <property type="project" value="UniProtKB-UniRule"/>
</dbReference>
<dbReference type="GO" id="GO:0016887">
    <property type="term" value="F:ATP hydrolysis activity"/>
    <property type="evidence" value="ECO:0007669"/>
    <property type="project" value="InterPro"/>
</dbReference>
<dbReference type="GO" id="GO:0046933">
    <property type="term" value="F:proton-transporting ATP synthase activity, rotational mechanism"/>
    <property type="evidence" value="ECO:0007669"/>
    <property type="project" value="UniProtKB-UniRule"/>
</dbReference>
<dbReference type="CDD" id="cd18110">
    <property type="entry name" value="ATP-synt_F1_beta_C"/>
    <property type="match status" value="1"/>
</dbReference>
<dbReference type="CDD" id="cd18115">
    <property type="entry name" value="ATP-synt_F1_beta_N"/>
    <property type="match status" value="1"/>
</dbReference>
<dbReference type="CDD" id="cd01133">
    <property type="entry name" value="F1-ATPase_beta_CD"/>
    <property type="match status" value="1"/>
</dbReference>
<dbReference type="FunFam" id="1.10.1140.10:FF:000001">
    <property type="entry name" value="ATP synthase subunit beta"/>
    <property type="match status" value="1"/>
</dbReference>
<dbReference type="FunFam" id="2.40.10.170:FF:000005">
    <property type="entry name" value="ATP synthase subunit beta"/>
    <property type="match status" value="1"/>
</dbReference>
<dbReference type="FunFam" id="3.40.50.300:FF:000026">
    <property type="entry name" value="ATP synthase subunit beta"/>
    <property type="match status" value="1"/>
</dbReference>
<dbReference type="Gene3D" id="2.40.10.170">
    <property type="match status" value="1"/>
</dbReference>
<dbReference type="Gene3D" id="1.10.1140.10">
    <property type="entry name" value="Bovine Mitochondrial F1-atpase, Atp Synthase Beta Chain, Chain D, domain 3"/>
    <property type="match status" value="1"/>
</dbReference>
<dbReference type="Gene3D" id="3.40.50.300">
    <property type="entry name" value="P-loop containing nucleotide triphosphate hydrolases"/>
    <property type="match status" value="1"/>
</dbReference>
<dbReference type="HAMAP" id="MF_01347">
    <property type="entry name" value="ATP_synth_beta_bact"/>
    <property type="match status" value="1"/>
</dbReference>
<dbReference type="InterPro" id="IPR003593">
    <property type="entry name" value="AAA+_ATPase"/>
</dbReference>
<dbReference type="InterPro" id="IPR055190">
    <property type="entry name" value="ATP-synt_VA_C"/>
</dbReference>
<dbReference type="InterPro" id="IPR005722">
    <property type="entry name" value="ATP_synth_F1_bsu"/>
</dbReference>
<dbReference type="InterPro" id="IPR020003">
    <property type="entry name" value="ATPase_a/bsu_AS"/>
</dbReference>
<dbReference type="InterPro" id="IPR050053">
    <property type="entry name" value="ATPase_alpha/beta_chains"/>
</dbReference>
<dbReference type="InterPro" id="IPR004100">
    <property type="entry name" value="ATPase_F1/V1/A1_a/bsu_N"/>
</dbReference>
<dbReference type="InterPro" id="IPR036121">
    <property type="entry name" value="ATPase_F1/V1/A1_a/bsu_N_sf"/>
</dbReference>
<dbReference type="InterPro" id="IPR000194">
    <property type="entry name" value="ATPase_F1/V1/A1_a/bsu_nucl-bd"/>
</dbReference>
<dbReference type="InterPro" id="IPR024034">
    <property type="entry name" value="ATPase_F1/V1_b/a_C"/>
</dbReference>
<dbReference type="InterPro" id="IPR027417">
    <property type="entry name" value="P-loop_NTPase"/>
</dbReference>
<dbReference type="NCBIfam" id="TIGR01039">
    <property type="entry name" value="atpD"/>
    <property type="match status" value="1"/>
</dbReference>
<dbReference type="PANTHER" id="PTHR15184">
    <property type="entry name" value="ATP SYNTHASE"/>
    <property type="match status" value="1"/>
</dbReference>
<dbReference type="PANTHER" id="PTHR15184:SF71">
    <property type="entry name" value="ATP SYNTHASE SUBUNIT BETA, MITOCHONDRIAL"/>
    <property type="match status" value="1"/>
</dbReference>
<dbReference type="Pfam" id="PF00006">
    <property type="entry name" value="ATP-synt_ab"/>
    <property type="match status" value="1"/>
</dbReference>
<dbReference type="Pfam" id="PF02874">
    <property type="entry name" value="ATP-synt_ab_N"/>
    <property type="match status" value="1"/>
</dbReference>
<dbReference type="Pfam" id="PF22919">
    <property type="entry name" value="ATP-synt_VA_C"/>
    <property type="match status" value="1"/>
</dbReference>
<dbReference type="PIRSF" id="PIRSF039072">
    <property type="entry name" value="ATPase_subunit_beta"/>
    <property type="match status" value="1"/>
</dbReference>
<dbReference type="SMART" id="SM00382">
    <property type="entry name" value="AAA"/>
    <property type="match status" value="1"/>
</dbReference>
<dbReference type="SUPFAM" id="SSF47917">
    <property type="entry name" value="C-terminal domain of alpha and beta subunits of F1 ATP synthase"/>
    <property type="match status" value="1"/>
</dbReference>
<dbReference type="SUPFAM" id="SSF50615">
    <property type="entry name" value="N-terminal domain of alpha and beta subunits of F1 ATP synthase"/>
    <property type="match status" value="1"/>
</dbReference>
<dbReference type="SUPFAM" id="SSF52540">
    <property type="entry name" value="P-loop containing nucleoside triphosphate hydrolases"/>
    <property type="match status" value="1"/>
</dbReference>
<dbReference type="PROSITE" id="PS00152">
    <property type="entry name" value="ATPASE_ALPHA_BETA"/>
    <property type="match status" value="1"/>
</dbReference>
<accession>Q6G1W9</accession>
<proteinExistence type="inferred from homology"/>